<comment type="function">
    <text evidence="1">Catalyzes the conversion of chorismate to isochorismate.</text>
</comment>
<comment type="catalytic activity">
    <reaction evidence="1">
        <text>chorismate = isochorismate</text>
        <dbReference type="Rhea" id="RHEA:18985"/>
        <dbReference type="ChEBI" id="CHEBI:29748"/>
        <dbReference type="ChEBI" id="CHEBI:29780"/>
        <dbReference type="EC" id="5.4.4.2"/>
    </reaction>
</comment>
<comment type="cofactor">
    <cofactor evidence="1">
        <name>Mg(2+)</name>
        <dbReference type="ChEBI" id="CHEBI:18420"/>
    </cofactor>
</comment>
<comment type="pathway">
    <text evidence="1">Quinol/quinone metabolism; 1,4-dihydroxy-2-naphthoate biosynthesis; 1,4-dihydroxy-2-naphthoate from chorismate: step 1/7.</text>
</comment>
<comment type="pathway">
    <text evidence="1">Quinol/quinone metabolism; menaquinone biosynthesis.</text>
</comment>
<comment type="similarity">
    <text evidence="1">Belongs to the isochorismate synthase family.</text>
</comment>
<protein>
    <recommendedName>
        <fullName evidence="1">Isochorismate synthase MenF</fullName>
        <ecNumber evidence="1">5.4.4.2</ecNumber>
    </recommendedName>
    <alternativeName>
        <fullName evidence="1">Isochorismate mutase</fullName>
    </alternativeName>
</protein>
<name>MENF_HAEIN</name>
<gene>
    <name evidence="1" type="primary">menF</name>
    <name type="ordered locus">HI_0285</name>
</gene>
<evidence type="ECO:0000255" key="1">
    <source>
        <dbReference type="HAMAP-Rule" id="MF_01935"/>
    </source>
</evidence>
<reference key="1">
    <citation type="journal article" date="1995" name="Science">
        <title>Whole-genome random sequencing and assembly of Haemophilus influenzae Rd.</title>
        <authorList>
            <person name="Fleischmann R.D."/>
            <person name="Adams M.D."/>
            <person name="White O."/>
            <person name="Clayton R.A."/>
            <person name="Kirkness E.F."/>
            <person name="Kerlavage A.R."/>
            <person name="Bult C.J."/>
            <person name="Tomb J.-F."/>
            <person name="Dougherty B.A."/>
            <person name="Merrick J.M."/>
            <person name="McKenney K."/>
            <person name="Sutton G.G."/>
            <person name="FitzHugh W."/>
            <person name="Fields C.A."/>
            <person name="Gocayne J.D."/>
            <person name="Scott J.D."/>
            <person name="Shirley R."/>
            <person name="Liu L.-I."/>
            <person name="Glodek A."/>
            <person name="Kelley J.M."/>
            <person name="Weidman J.F."/>
            <person name="Phillips C.A."/>
            <person name="Spriggs T."/>
            <person name="Hedblom E."/>
            <person name="Cotton M.D."/>
            <person name="Utterback T.R."/>
            <person name="Hanna M.C."/>
            <person name="Nguyen D.T."/>
            <person name="Saudek D.M."/>
            <person name="Brandon R.C."/>
            <person name="Fine L.D."/>
            <person name="Fritchman J.L."/>
            <person name="Fuhrmann J.L."/>
            <person name="Geoghagen N.S.M."/>
            <person name="Gnehm C.L."/>
            <person name="McDonald L.A."/>
            <person name="Small K.V."/>
            <person name="Fraser C.M."/>
            <person name="Smith H.O."/>
            <person name="Venter J.C."/>
        </authorList>
    </citation>
    <scope>NUCLEOTIDE SEQUENCE [LARGE SCALE GENOMIC DNA]</scope>
    <source>
        <strain>ATCC 51907 / DSM 11121 / KW20 / Rd</strain>
    </source>
</reference>
<accession>P44613</accession>
<keyword id="KW-0413">Isomerase</keyword>
<keyword id="KW-0460">Magnesium</keyword>
<keyword id="KW-0474">Menaquinone biosynthesis</keyword>
<keyword id="KW-0479">Metal-binding</keyword>
<keyword id="KW-1185">Reference proteome</keyword>
<sequence length="430" mass="48466">MYLKQNLMSYLAQAIGELKSQIHAYLQQSTNELVRFQVKLDKVDLLAWLKGQSAYPQFYLHFRDEEKALAALGAVQSFSQLNLAQEFIEESGFPLVGGLQFQGTAQFVLPKMLVEQDNKGTLVSFFVKNEQSANDTLAHLKTFENLTALSALPKQIPLHTELRANERTWCDWVNQALVEIKSGELTKIVLANETTFHLKQAINAYDFLAESEKQNQGCYHFLWAENSHSVFVGSTPERLFAREYNLLLTEALAGTASVSESEEETQSQANWLLNDEKNLKENWLVVEDISQNLRKQVESFDVSNVELKPLRKVQHLIRKIRANLTAHYADVNILKAIHPTAAVSGLPQQQAKMILSEIETFDRGWYAGTLGVMSDVCSEFCVAIRSAFIEGHRIRVFAGAGIVAGSQPLEEWKEIERKAAGLISLFAEEK</sequence>
<proteinExistence type="inferred from homology"/>
<dbReference type="EC" id="5.4.4.2" evidence="1"/>
<dbReference type="EMBL" id="L42023">
    <property type="protein sequence ID" value="AAC21947.1"/>
    <property type="molecule type" value="Genomic_DNA"/>
</dbReference>
<dbReference type="PIR" id="E64059">
    <property type="entry name" value="E64059"/>
</dbReference>
<dbReference type="RefSeq" id="NP_438452.1">
    <property type="nucleotide sequence ID" value="NC_000907.1"/>
</dbReference>
<dbReference type="SMR" id="P44613"/>
<dbReference type="STRING" id="71421.HI_0285"/>
<dbReference type="EnsemblBacteria" id="AAC21947">
    <property type="protein sequence ID" value="AAC21947"/>
    <property type="gene ID" value="HI_0285"/>
</dbReference>
<dbReference type="KEGG" id="hin:HI_0285"/>
<dbReference type="PATRIC" id="fig|71421.8.peg.300"/>
<dbReference type="eggNOG" id="COG1169">
    <property type="taxonomic scope" value="Bacteria"/>
</dbReference>
<dbReference type="HOGENOM" id="CLU_006493_8_4_6"/>
<dbReference type="OrthoDB" id="9806579at2"/>
<dbReference type="PhylomeDB" id="P44613"/>
<dbReference type="BioCyc" id="HINF71421:G1GJ1-303-MONOMER"/>
<dbReference type="UniPathway" id="UPA00079"/>
<dbReference type="UniPathway" id="UPA01057">
    <property type="reaction ID" value="UER00163"/>
</dbReference>
<dbReference type="Proteomes" id="UP000000579">
    <property type="component" value="Chromosome"/>
</dbReference>
<dbReference type="GO" id="GO:0008909">
    <property type="term" value="F:isochorismate synthase activity"/>
    <property type="evidence" value="ECO:0007669"/>
    <property type="project" value="UniProtKB-UniRule"/>
</dbReference>
<dbReference type="GO" id="GO:0000287">
    <property type="term" value="F:magnesium ion binding"/>
    <property type="evidence" value="ECO:0007669"/>
    <property type="project" value="UniProtKB-UniRule"/>
</dbReference>
<dbReference type="GO" id="GO:0000162">
    <property type="term" value="P:L-tryptophan biosynthetic process"/>
    <property type="evidence" value="ECO:0000318"/>
    <property type="project" value="GO_Central"/>
</dbReference>
<dbReference type="GO" id="GO:0009234">
    <property type="term" value="P:menaquinone biosynthetic process"/>
    <property type="evidence" value="ECO:0007669"/>
    <property type="project" value="UniProtKB-UniRule"/>
</dbReference>
<dbReference type="Gene3D" id="3.60.120.10">
    <property type="entry name" value="Anthranilate synthase"/>
    <property type="match status" value="1"/>
</dbReference>
<dbReference type="HAMAP" id="MF_01935">
    <property type="entry name" value="MenF"/>
    <property type="match status" value="1"/>
</dbReference>
<dbReference type="InterPro" id="IPR005801">
    <property type="entry name" value="ADC_synthase"/>
</dbReference>
<dbReference type="InterPro" id="IPR015890">
    <property type="entry name" value="Chorismate_C"/>
</dbReference>
<dbReference type="InterPro" id="IPR004561">
    <property type="entry name" value="IsoChor_synthase"/>
</dbReference>
<dbReference type="InterPro" id="IPR034681">
    <property type="entry name" value="MenF"/>
</dbReference>
<dbReference type="InterPro" id="IPR044250">
    <property type="entry name" value="MenF-like"/>
</dbReference>
<dbReference type="NCBIfam" id="TIGR00543">
    <property type="entry name" value="isochor_syn"/>
    <property type="match status" value="1"/>
</dbReference>
<dbReference type="PANTHER" id="PTHR47253">
    <property type="match status" value="1"/>
</dbReference>
<dbReference type="PANTHER" id="PTHR47253:SF4">
    <property type="entry name" value="ISOCHORISMATE SYNTHASE 2, CHLOROPLASTIC"/>
    <property type="match status" value="1"/>
</dbReference>
<dbReference type="Pfam" id="PF00425">
    <property type="entry name" value="Chorismate_bind"/>
    <property type="match status" value="1"/>
</dbReference>
<dbReference type="SUPFAM" id="SSF56322">
    <property type="entry name" value="ADC synthase"/>
    <property type="match status" value="1"/>
</dbReference>
<organism>
    <name type="scientific">Haemophilus influenzae (strain ATCC 51907 / DSM 11121 / KW20 / Rd)</name>
    <dbReference type="NCBI Taxonomy" id="71421"/>
    <lineage>
        <taxon>Bacteria</taxon>
        <taxon>Pseudomonadati</taxon>
        <taxon>Pseudomonadota</taxon>
        <taxon>Gammaproteobacteria</taxon>
        <taxon>Pasteurellales</taxon>
        <taxon>Pasteurellaceae</taxon>
        <taxon>Haemophilus</taxon>
    </lineage>
</organism>
<feature type="chain" id="PRO_0000154148" description="Isochorismate synthase MenF">
    <location>
        <begin position="1"/>
        <end position="430"/>
    </location>
</feature>
<feature type="active site" description="Proton acceptor" evidence="1">
    <location>
        <position position="187"/>
    </location>
</feature>
<feature type="active site" description="Proton donor" evidence="1">
    <location>
        <position position="237"/>
    </location>
</feature>
<feature type="binding site" evidence="1">
    <location>
        <position position="281"/>
    </location>
    <ligand>
        <name>Mg(2+)</name>
        <dbReference type="ChEBI" id="CHEBI:18420"/>
    </ligand>
</feature>
<feature type="binding site" evidence="1">
    <location>
        <position position="414"/>
    </location>
    <ligand>
        <name>Mg(2+)</name>
        <dbReference type="ChEBI" id="CHEBI:18420"/>
    </ligand>
</feature>